<dbReference type="EC" id="2.7.7.41" evidence="1"/>
<dbReference type="EMBL" id="FO081276">
    <property type="protein sequence ID" value="CCD70409.1"/>
    <property type="molecule type" value="Genomic_DNA"/>
</dbReference>
<dbReference type="RefSeq" id="NP_491034.1">
    <property type="nucleotide sequence ID" value="NM_058633.2"/>
</dbReference>
<dbReference type="SMR" id="Q9N4G7"/>
<dbReference type="BioGRID" id="37317">
    <property type="interactions" value="1"/>
</dbReference>
<dbReference type="FunCoup" id="Q9N4G7">
    <property type="interactions" value="1933"/>
</dbReference>
<dbReference type="STRING" id="6239.Y71F9B.2a.1"/>
<dbReference type="PaxDb" id="6239-Y71F9B.2"/>
<dbReference type="PeptideAtlas" id="Q9N4G7"/>
<dbReference type="EnsemblMetazoa" id="Y71F9B.2a.1">
    <property type="protein sequence ID" value="Y71F9B.2a.1"/>
    <property type="gene ID" value="WBGene00022126"/>
</dbReference>
<dbReference type="GeneID" id="171836"/>
<dbReference type="KEGG" id="cel:CELE_Y71F9B.2"/>
<dbReference type="UCSC" id="Y71F9B.2">
    <property type="organism name" value="c. elegans"/>
</dbReference>
<dbReference type="AGR" id="WB:WBGene00022126"/>
<dbReference type="CTD" id="171836"/>
<dbReference type="WormBase" id="Y71F9B.2a">
    <property type="protein sequence ID" value="CE28809"/>
    <property type="gene ID" value="WBGene00022126"/>
</dbReference>
<dbReference type="eggNOG" id="KOG2986">
    <property type="taxonomic scope" value="Eukaryota"/>
</dbReference>
<dbReference type="GeneTree" id="ENSGT00390000000616"/>
<dbReference type="HOGENOM" id="CLU_030279_1_1_1"/>
<dbReference type="InParanoid" id="Q9N4G7"/>
<dbReference type="OMA" id="HAENMHR"/>
<dbReference type="OrthoDB" id="341477at2759"/>
<dbReference type="PhylomeDB" id="Q9N4G7"/>
<dbReference type="UniPathway" id="UPA00557">
    <property type="reaction ID" value="UER00614"/>
</dbReference>
<dbReference type="PRO" id="PR:Q9N4G7"/>
<dbReference type="Proteomes" id="UP000001940">
    <property type="component" value="Chromosome I"/>
</dbReference>
<dbReference type="Bgee" id="WBGene00022126">
    <property type="expression patterns" value="Expressed in germ line (C elegans) and 4 other cell types or tissues"/>
</dbReference>
<dbReference type="ExpressionAtlas" id="Q9N4G7">
    <property type="expression patterns" value="baseline and differential"/>
</dbReference>
<dbReference type="GO" id="GO:0005743">
    <property type="term" value="C:mitochondrial inner membrane"/>
    <property type="evidence" value="ECO:0007669"/>
    <property type="project" value="UniProtKB-SubCell"/>
</dbReference>
<dbReference type="GO" id="GO:0005739">
    <property type="term" value="C:mitochondrion"/>
    <property type="evidence" value="ECO:0000318"/>
    <property type="project" value="GO_Central"/>
</dbReference>
<dbReference type="GO" id="GO:0004605">
    <property type="term" value="F:phosphatidate cytidylyltransferase activity"/>
    <property type="evidence" value="ECO:0000250"/>
    <property type="project" value="UniProtKB"/>
</dbReference>
<dbReference type="GO" id="GO:0032049">
    <property type="term" value="P:cardiolipin biosynthetic process"/>
    <property type="evidence" value="ECO:0000250"/>
    <property type="project" value="UniProtKB"/>
</dbReference>
<dbReference type="GO" id="GO:0016024">
    <property type="term" value="P:CDP-diacylglycerol biosynthetic process"/>
    <property type="evidence" value="ECO:0000318"/>
    <property type="project" value="GO_Central"/>
</dbReference>
<dbReference type="InterPro" id="IPR015222">
    <property type="entry name" value="Tam41"/>
</dbReference>
<dbReference type="PANTHER" id="PTHR13619">
    <property type="entry name" value="PHOSPHATIDATE CYTIDYLYLTRANSFERASE, MITOCHONDRIAL"/>
    <property type="match status" value="1"/>
</dbReference>
<dbReference type="PANTHER" id="PTHR13619:SF0">
    <property type="entry name" value="PHOSPHATIDATE CYTIDYLYLTRANSFERASE, MITOCHONDRIAL"/>
    <property type="match status" value="1"/>
</dbReference>
<dbReference type="Pfam" id="PF09139">
    <property type="entry name" value="Tam41_Mmp37"/>
    <property type="match status" value="1"/>
</dbReference>
<dbReference type="PIRSF" id="PIRSF028840">
    <property type="entry name" value="Mmp37"/>
    <property type="match status" value="1"/>
</dbReference>
<proteinExistence type="inferred from homology"/>
<organism>
    <name type="scientific">Caenorhabditis elegans</name>
    <dbReference type="NCBI Taxonomy" id="6239"/>
    <lineage>
        <taxon>Eukaryota</taxon>
        <taxon>Metazoa</taxon>
        <taxon>Ecdysozoa</taxon>
        <taxon>Nematoda</taxon>
        <taxon>Chromadorea</taxon>
        <taxon>Rhabditida</taxon>
        <taxon>Rhabditina</taxon>
        <taxon>Rhabditomorpha</taxon>
        <taxon>Rhabditoidea</taxon>
        <taxon>Rhabditidae</taxon>
        <taxon>Peloderinae</taxon>
        <taxon>Caenorhabditis</taxon>
    </lineage>
</organism>
<keyword id="KW-0444">Lipid biosynthesis</keyword>
<keyword id="KW-0443">Lipid metabolism</keyword>
<keyword id="KW-0460">Magnesium</keyword>
<keyword id="KW-0472">Membrane</keyword>
<keyword id="KW-0496">Mitochondrion</keyword>
<keyword id="KW-0999">Mitochondrion inner membrane</keyword>
<keyword id="KW-0548">Nucleotidyltransferase</keyword>
<keyword id="KW-0594">Phospholipid biosynthesis</keyword>
<keyword id="KW-1208">Phospholipid metabolism</keyword>
<keyword id="KW-1185">Reference proteome</keyword>
<keyword id="KW-0808">Transferase</keyword>
<name>TAM41_CAEEL</name>
<feature type="chain" id="PRO_0000248359" description="Phosphatidate cytidylyltransferase, mitochondrial">
    <location>
        <begin position="1"/>
        <end position="321"/>
    </location>
</feature>
<evidence type="ECO:0000250" key="1">
    <source>
        <dbReference type="UniProtKB" id="P53230"/>
    </source>
</evidence>
<evidence type="ECO:0000305" key="2"/>
<gene>
    <name type="ORF">Y71F9B.2</name>
</gene>
<sequence>MDEYRELISVLPLETVEYAFAYGSGAIQQQNEDKSEKMVDFVIVTKNAQEFHRDNILKNPQHYSLLRLMGPKMIEKIQCNFAARVYYNTHVKVGKRKIKYGVISYENVKQDLLDWRWIYISGRLHKPVLEVIKPRQDMCDLVTENRRSALHSSLLLLPESFTLKQLFHKIVGLSYTGDFRMVVGEDKNKINKIVEGNYEELLRVYEPLMNDDARLSVMSPAKLIQDGSTTAIYHRLNLLPSEVLNRIQKNMNRVQKRQRDAEEVIFSLAHRHDVAATVETAIGGIIRPVSLSQTAKNAFSAGVTRSIIYSMAKMSKFLKSK</sequence>
<reference key="1">
    <citation type="journal article" date="1998" name="Science">
        <title>Genome sequence of the nematode C. elegans: a platform for investigating biology.</title>
        <authorList>
            <consortium name="The C. elegans sequencing consortium"/>
        </authorList>
    </citation>
    <scope>NUCLEOTIDE SEQUENCE [LARGE SCALE GENOMIC DNA]</scope>
    <source>
        <strain>Bristol N2</strain>
    </source>
</reference>
<accession>Q9N4G7</accession>
<protein>
    <recommendedName>
        <fullName>Phosphatidate cytidylyltransferase, mitochondrial</fullName>
        <ecNumber evidence="1">2.7.7.41</ecNumber>
    </recommendedName>
    <alternativeName>
        <fullName>CDP-diacylglycerol synthase</fullName>
        <shortName>CDP-DAG synthase</shortName>
    </alternativeName>
    <alternativeName>
        <fullName>Mitochondrial translocator assembly and maintenance protein 41 homolog</fullName>
        <shortName>TAM41</shortName>
    </alternativeName>
</protein>
<comment type="function">
    <text evidence="1">Catalyzes the formation of CDP-diacylglycerol (CDP-DAG) from phosphatidic acid (PA) in the mitochondrial inner membrane. Required for the biosynthesis of the dimeric phospholipid cardiolipin, which stabilizes supercomplexes of the mitochondrial respiratory chain in the mitochondrial inner membrane.</text>
</comment>
<comment type="catalytic activity">
    <reaction evidence="1">
        <text>a 1,2-diacyl-sn-glycero-3-phosphate + CTP + H(+) = a CDP-1,2-diacyl-sn-glycerol + diphosphate</text>
        <dbReference type="Rhea" id="RHEA:16229"/>
        <dbReference type="ChEBI" id="CHEBI:15378"/>
        <dbReference type="ChEBI" id="CHEBI:33019"/>
        <dbReference type="ChEBI" id="CHEBI:37563"/>
        <dbReference type="ChEBI" id="CHEBI:58332"/>
        <dbReference type="ChEBI" id="CHEBI:58608"/>
        <dbReference type="EC" id="2.7.7.41"/>
    </reaction>
    <physiologicalReaction direction="left-to-right" evidence="1">
        <dbReference type="Rhea" id="RHEA:16230"/>
    </physiologicalReaction>
</comment>
<comment type="cofactor">
    <cofactor evidence="1">
        <name>Mg(2+)</name>
        <dbReference type="ChEBI" id="CHEBI:18420"/>
    </cofactor>
    <cofactor evidence="1">
        <name>Co(2+)</name>
        <dbReference type="ChEBI" id="CHEBI:48828"/>
    </cofactor>
    <cofactor evidence="1">
        <name>Cu(2+)</name>
        <dbReference type="ChEBI" id="CHEBI:29036"/>
    </cofactor>
    <text evidence="1">Magnesium. Also active with cobalt or copper.</text>
</comment>
<comment type="pathway">
    <text evidence="1">Phospholipid metabolism; CDP-diacylglycerol biosynthesis; CDP-diacylglycerol from sn-glycerol 3-phosphate: step 3/3.</text>
</comment>
<comment type="subcellular location">
    <subcellularLocation>
        <location evidence="1">Mitochondrion inner membrane</location>
        <topology evidence="1">Peripheral membrane protein</topology>
        <orientation evidence="1">Matrix side</orientation>
    </subcellularLocation>
</comment>
<comment type="similarity">
    <text evidence="2">Belongs to the TAM41 family.</text>
</comment>